<proteinExistence type="inferred from homology"/>
<comment type="function">
    <text evidence="1">Catalyzes the attachment of serine to tRNA(Ser). Is also able to aminoacylate tRNA(Sec) with serine, to form the misacylated tRNA L-seryl-tRNA(Sec), which will be further converted into selenocysteinyl-tRNA(Sec).</text>
</comment>
<comment type="catalytic activity">
    <reaction evidence="1">
        <text>tRNA(Ser) + L-serine + ATP = L-seryl-tRNA(Ser) + AMP + diphosphate + H(+)</text>
        <dbReference type="Rhea" id="RHEA:12292"/>
        <dbReference type="Rhea" id="RHEA-COMP:9669"/>
        <dbReference type="Rhea" id="RHEA-COMP:9703"/>
        <dbReference type="ChEBI" id="CHEBI:15378"/>
        <dbReference type="ChEBI" id="CHEBI:30616"/>
        <dbReference type="ChEBI" id="CHEBI:33019"/>
        <dbReference type="ChEBI" id="CHEBI:33384"/>
        <dbReference type="ChEBI" id="CHEBI:78442"/>
        <dbReference type="ChEBI" id="CHEBI:78533"/>
        <dbReference type="ChEBI" id="CHEBI:456215"/>
        <dbReference type="EC" id="6.1.1.11"/>
    </reaction>
</comment>
<comment type="catalytic activity">
    <reaction evidence="1">
        <text>tRNA(Sec) + L-serine + ATP = L-seryl-tRNA(Sec) + AMP + diphosphate + H(+)</text>
        <dbReference type="Rhea" id="RHEA:42580"/>
        <dbReference type="Rhea" id="RHEA-COMP:9742"/>
        <dbReference type="Rhea" id="RHEA-COMP:10128"/>
        <dbReference type="ChEBI" id="CHEBI:15378"/>
        <dbReference type="ChEBI" id="CHEBI:30616"/>
        <dbReference type="ChEBI" id="CHEBI:33019"/>
        <dbReference type="ChEBI" id="CHEBI:33384"/>
        <dbReference type="ChEBI" id="CHEBI:78442"/>
        <dbReference type="ChEBI" id="CHEBI:78533"/>
        <dbReference type="ChEBI" id="CHEBI:456215"/>
        <dbReference type="EC" id="6.1.1.11"/>
    </reaction>
</comment>
<comment type="pathway">
    <text evidence="1">Aminoacyl-tRNA biosynthesis; selenocysteinyl-tRNA(Sec) biosynthesis; L-seryl-tRNA(Sec) from L-serine and tRNA(Sec): step 1/1.</text>
</comment>
<comment type="subunit">
    <text evidence="1">Homodimer. The tRNA molecule binds across the dimer.</text>
</comment>
<comment type="subcellular location">
    <subcellularLocation>
        <location evidence="1">Cytoplasm</location>
    </subcellularLocation>
</comment>
<comment type="domain">
    <text evidence="1">Consists of two distinct domains, a catalytic core and a N-terminal extension that is involved in tRNA binding.</text>
</comment>
<comment type="similarity">
    <text evidence="1">Belongs to the class-II aminoacyl-tRNA synthetase family. Type-1 seryl-tRNA synthetase subfamily.</text>
</comment>
<dbReference type="EC" id="6.1.1.11" evidence="1"/>
<dbReference type="EMBL" id="CP001396">
    <property type="protein sequence ID" value="ACR65544.1"/>
    <property type="molecule type" value="Genomic_DNA"/>
</dbReference>
<dbReference type="RefSeq" id="WP_000886683.1">
    <property type="nucleotide sequence ID" value="NC_012759.1"/>
</dbReference>
<dbReference type="SMR" id="C4ZQ19"/>
<dbReference type="GeneID" id="93776527"/>
<dbReference type="KEGG" id="ebw:BWG_0745"/>
<dbReference type="HOGENOM" id="CLU_023797_1_1_6"/>
<dbReference type="UniPathway" id="UPA00906">
    <property type="reaction ID" value="UER00895"/>
</dbReference>
<dbReference type="GO" id="GO:0005737">
    <property type="term" value="C:cytoplasm"/>
    <property type="evidence" value="ECO:0007669"/>
    <property type="project" value="UniProtKB-SubCell"/>
</dbReference>
<dbReference type="GO" id="GO:0005524">
    <property type="term" value="F:ATP binding"/>
    <property type="evidence" value="ECO:0007669"/>
    <property type="project" value="UniProtKB-UniRule"/>
</dbReference>
<dbReference type="GO" id="GO:0004828">
    <property type="term" value="F:serine-tRNA ligase activity"/>
    <property type="evidence" value="ECO:0007669"/>
    <property type="project" value="UniProtKB-UniRule"/>
</dbReference>
<dbReference type="GO" id="GO:0016260">
    <property type="term" value="P:selenocysteine biosynthetic process"/>
    <property type="evidence" value="ECO:0007669"/>
    <property type="project" value="UniProtKB-UniRule"/>
</dbReference>
<dbReference type="GO" id="GO:0006434">
    <property type="term" value="P:seryl-tRNA aminoacylation"/>
    <property type="evidence" value="ECO:0007669"/>
    <property type="project" value="UniProtKB-UniRule"/>
</dbReference>
<dbReference type="CDD" id="cd00770">
    <property type="entry name" value="SerRS_core"/>
    <property type="match status" value="1"/>
</dbReference>
<dbReference type="FunFam" id="1.10.287.40:FF:000001">
    <property type="entry name" value="Serine--tRNA ligase"/>
    <property type="match status" value="1"/>
</dbReference>
<dbReference type="FunFam" id="3.30.930.10:FF:000018">
    <property type="entry name" value="Serine--tRNA ligase"/>
    <property type="match status" value="1"/>
</dbReference>
<dbReference type="Gene3D" id="3.30.930.10">
    <property type="entry name" value="Bira Bifunctional Protein, Domain 2"/>
    <property type="match status" value="1"/>
</dbReference>
<dbReference type="Gene3D" id="1.10.287.40">
    <property type="entry name" value="Serine-tRNA synthetase, tRNA binding domain"/>
    <property type="match status" value="1"/>
</dbReference>
<dbReference type="HAMAP" id="MF_00176">
    <property type="entry name" value="Ser_tRNA_synth_type1"/>
    <property type="match status" value="1"/>
</dbReference>
<dbReference type="InterPro" id="IPR002314">
    <property type="entry name" value="aa-tRNA-synt_IIb"/>
</dbReference>
<dbReference type="InterPro" id="IPR006195">
    <property type="entry name" value="aa-tRNA-synth_II"/>
</dbReference>
<dbReference type="InterPro" id="IPR045864">
    <property type="entry name" value="aa-tRNA-synth_II/BPL/LPL"/>
</dbReference>
<dbReference type="InterPro" id="IPR002317">
    <property type="entry name" value="Ser-tRNA-ligase_type_1"/>
</dbReference>
<dbReference type="InterPro" id="IPR015866">
    <property type="entry name" value="Ser-tRNA-synth_1_N"/>
</dbReference>
<dbReference type="InterPro" id="IPR042103">
    <property type="entry name" value="SerRS_1_N_sf"/>
</dbReference>
<dbReference type="InterPro" id="IPR033729">
    <property type="entry name" value="SerRS_core"/>
</dbReference>
<dbReference type="InterPro" id="IPR010978">
    <property type="entry name" value="tRNA-bd_arm"/>
</dbReference>
<dbReference type="NCBIfam" id="TIGR00414">
    <property type="entry name" value="serS"/>
    <property type="match status" value="1"/>
</dbReference>
<dbReference type="PANTHER" id="PTHR43697:SF1">
    <property type="entry name" value="SERINE--TRNA LIGASE"/>
    <property type="match status" value="1"/>
</dbReference>
<dbReference type="PANTHER" id="PTHR43697">
    <property type="entry name" value="SERYL-TRNA SYNTHETASE"/>
    <property type="match status" value="1"/>
</dbReference>
<dbReference type="Pfam" id="PF02403">
    <property type="entry name" value="Seryl_tRNA_N"/>
    <property type="match status" value="1"/>
</dbReference>
<dbReference type="Pfam" id="PF00587">
    <property type="entry name" value="tRNA-synt_2b"/>
    <property type="match status" value="1"/>
</dbReference>
<dbReference type="PIRSF" id="PIRSF001529">
    <property type="entry name" value="Ser-tRNA-synth_IIa"/>
    <property type="match status" value="1"/>
</dbReference>
<dbReference type="PRINTS" id="PR00981">
    <property type="entry name" value="TRNASYNTHSER"/>
</dbReference>
<dbReference type="SUPFAM" id="SSF55681">
    <property type="entry name" value="Class II aaRS and biotin synthetases"/>
    <property type="match status" value="1"/>
</dbReference>
<dbReference type="SUPFAM" id="SSF46589">
    <property type="entry name" value="tRNA-binding arm"/>
    <property type="match status" value="1"/>
</dbReference>
<dbReference type="PROSITE" id="PS50862">
    <property type="entry name" value="AA_TRNA_LIGASE_II"/>
    <property type="match status" value="1"/>
</dbReference>
<name>SYS_ECOBW</name>
<gene>
    <name evidence="1" type="primary">serS</name>
    <name type="ordered locus">BWG_0745</name>
</gene>
<sequence length="430" mass="48414">MLDPNLLRNEPDAVAEKLARRGFKLDVDKLGALEERRKVLQVKTENLQAERNSRSKSIGQAKARGEDIEPLRLEVNKLGEELDAAKAELDALQAEIRDIALTIPNLPADEVPVGKDENDNVEVSRWGTPREFDFEVRDHVTLGEMHSGLDFAAAVKLTGSRFVVMKGQIARMHRALSQFMLDLHTEQHGYSENYVPYLVNQDTLYGTGQLPKFAGDLFHTRPLEEEADTSNYALIPTAEVPLTNLVRGEIIDEDDLPIKMTAHTPCFRSEAGSYGRDTRGLIRMHQFDKVEMVQIVRPEDSMAALEEMTGHAEKVLQLLGLPYRKIILCTGDMGFGACKTYDLEVWIPAQNTYREISSCSNVWDFQARRMQARCRSKSDKKTRLVHTLNGSGLAVGRTLVAVMENYQQADGRIEVPEVLRPYMNGLEYIG</sequence>
<feature type="chain" id="PRO_1000203754" description="Serine--tRNA ligase">
    <location>
        <begin position="1"/>
        <end position="430"/>
    </location>
</feature>
<feature type="binding site" evidence="1">
    <location>
        <begin position="237"/>
        <end position="239"/>
    </location>
    <ligand>
        <name>L-serine</name>
        <dbReference type="ChEBI" id="CHEBI:33384"/>
    </ligand>
</feature>
<feature type="binding site" evidence="1">
    <location>
        <begin position="268"/>
        <end position="270"/>
    </location>
    <ligand>
        <name>ATP</name>
        <dbReference type="ChEBI" id="CHEBI:30616"/>
    </ligand>
</feature>
<feature type="binding site" evidence="1">
    <location>
        <position position="291"/>
    </location>
    <ligand>
        <name>L-serine</name>
        <dbReference type="ChEBI" id="CHEBI:33384"/>
    </ligand>
</feature>
<feature type="binding site" evidence="1">
    <location>
        <begin position="355"/>
        <end position="358"/>
    </location>
    <ligand>
        <name>ATP</name>
        <dbReference type="ChEBI" id="CHEBI:30616"/>
    </ligand>
</feature>
<feature type="binding site" evidence="1">
    <location>
        <position position="391"/>
    </location>
    <ligand>
        <name>L-serine</name>
        <dbReference type="ChEBI" id="CHEBI:33384"/>
    </ligand>
</feature>
<reference key="1">
    <citation type="journal article" date="2009" name="J. Bacteriol.">
        <title>Genomic sequencing reveals regulatory mutations and recombinational events in the widely used MC4100 lineage of Escherichia coli K-12.</title>
        <authorList>
            <person name="Ferenci T."/>
            <person name="Zhou Z."/>
            <person name="Betteridge T."/>
            <person name="Ren Y."/>
            <person name="Liu Y."/>
            <person name="Feng L."/>
            <person name="Reeves P.R."/>
            <person name="Wang L."/>
        </authorList>
    </citation>
    <scope>NUCLEOTIDE SEQUENCE [LARGE SCALE GENOMIC DNA]</scope>
    <source>
        <strain>K12 / MC4100 / BW2952</strain>
    </source>
</reference>
<keyword id="KW-0030">Aminoacyl-tRNA synthetase</keyword>
<keyword id="KW-0067">ATP-binding</keyword>
<keyword id="KW-0963">Cytoplasm</keyword>
<keyword id="KW-0436">Ligase</keyword>
<keyword id="KW-0547">Nucleotide-binding</keyword>
<keyword id="KW-0648">Protein biosynthesis</keyword>
<organism>
    <name type="scientific">Escherichia coli (strain K12 / MC4100 / BW2952)</name>
    <dbReference type="NCBI Taxonomy" id="595496"/>
    <lineage>
        <taxon>Bacteria</taxon>
        <taxon>Pseudomonadati</taxon>
        <taxon>Pseudomonadota</taxon>
        <taxon>Gammaproteobacteria</taxon>
        <taxon>Enterobacterales</taxon>
        <taxon>Enterobacteriaceae</taxon>
        <taxon>Escherichia</taxon>
    </lineage>
</organism>
<accession>C4ZQ19</accession>
<protein>
    <recommendedName>
        <fullName evidence="1">Serine--tRNA ligase</fullName>
        <ecNumber evidence="1">6.1.1.11</ecNumber>
    </recommendedName>
    <alternativeName>
        <fullName evidence="1">Seryl-tRNA synthetase</fullName>
        <shortName evidence="1">SerRS</shortName>
    </alternativeName>
    <alternativeName>
        <fullName evidence="1">Seryl-tRNA(Ser/Sec) synthetase</fullName>
    </alternativeName>
</protein>
<evidence type="ECO:0000255" key="1">
    <source>
        <dbReference type="HAMAP-Rule" id="MF_00176"/>
    </source>
</evidence>